<name>MURA_RICB8</name>
<sequence length="419" mass="45269">MQKLIIHGGKPLKGIINISGAKNAVLPIMAASILTDKLHITNVPKLTDVSTMKELLKSHGAGIEIIEHENEFELVINAANINNLTADYEIVRKMRASIWVLGPLLSRYGKAKVSLPGGCAIGARQVDLHIAVLKAMGAEITIEDGYINASTAGRLKGTHFIFDKISVGATINAVLAAVLADGETLLFNCAREPEIVDLCNCLNKMGADISGIGTSEIRINGKDSLSEASYRVLPDRIEAGTYMFAAAITKGDLKLYGIDYHIIENIALKLIETGIKVMPIDNGVQVTYADKLNAVNLETNPYPGFATDLQAQFMSLMTISQGSSIITENIFENRFMHVPELCRMGADITVRGNQAIVQGVKGLKGAEVMASDLRASVSLILAGLSTDSETVLHRIYHLDRGFQNLEKKLNNCGADIKRV</sequence>
<proteinExistence type="inferred from homology"/>
<dbReference type="EC" id="2.5.1.7" evidence="1"/>
<dbReference type="EMBL" id="CP000849">
    <property type="protein sequence ID" value="ABV79090.1"/>
    <property type="molecule type" value="Genomic_DNA"/>
</dbReference>
<dbReference type="RefSeq" id="WP_011477655.1">
    <property type="nucleotide sequence ID" value="NC_009883.1"/>
</dbReference>
<dbReference type="SMR" id="A8GW63"/>
<dbReference type="KEGG" id="rbo:A1I_03685"/>
<dbReference type="HOGENOM" id="CLU_027387_0_0_5"/>
<dbReference type="UniPathway" id="UPA00219"/>
<dbReference type="GO" id="GO:0005737">
    <property type="term" value="C:cytoplasm"/>
    <property type="evidence" value="ECO:0007669"/>
    <property type="project" value="UniProtKB-SubCell"/>
</dbReference>
<dbReference type="GO" id="GO:0008760">
    <property type="term" value="F:UDP-N-acetylglucosamine 1-carboxyvinyltransferase activity"/>
    <property type="evidence" value="ECO:0007669"/>
    <property type="project" value="UniProtKB-UniRule"/>
</dbReference>
<dbReference type="GO" id="GO:0051301">
    <property type="term" value="P:cell division"/>
    <property type="evidence" value="ECO:0007669"/>
    <property type="project" value="UniProtKB-KW"/>
</dbReference>
<dbReference type="GO" id="GO:0071555">
    <property type="term" value="P:cell wall organization"/>
    <property type="evidence" value="ECO:0007669"/>
    <property type="project" value="UniProtKB-KW"/>
</dbReference>
<dbReference type="GO" id="GO:0009252">
    <property type="term" value="P:peptidoglycan biosynthetic process"/>
    <property type="evidence" value="ECO:0007669"/>
    <property type="project" value="UniProtKB-UniRule"/>
</dbReference>
<dbReference type="GO" id="GO:0008360">
    <property type="term" value="P:regulation of cell shape"/>
    <property type="evidence" value="ECO:0007669"/>
    <property type="project" value="UniProtKB-KW"/>
</dbReference>
<dbReference type="GO" id="GO:0019277">
    <property type="term" value="P:UDP-N-acetylgalactosamine biosynthetic process"/>
    <property type="evidence" value="ECO:0007669"/>
    <property type="project" value="InterPro"/>
</dbReference>
<dbReference type="CDD" id="cd01555">
    <property type="entry name" value="UdpNAET"/>
    <property type="match status" value="1"/>
</dbReference>
<dbReference type="FunFam" id="3.65.10.10:FF:000001">
    <property type="entry name" value="UDP-N-acetylglucosamine 1-carboxyvinyltransferase"/>
    <property type="match status" value="1"/>
</dbReference>
<dbReference type="Gene3D" id="3.65.10.10">
    <property type="entry name" value="Enolpyruvate transferase domain"/>
    <property type="match status" value="2"/>
</dbReference>
<dbReference type="HAMAP" id="MF_00111">
    <property type="entry name" value="MurA"/>
    <property type="match status" value="1"/>
</dbReference>
<dbReference type="InterPro" id="IPR001986">
    <property type="entry name" value="Enolpyruvate_Tfrase_dom"/>
</dbReference>
<dbReference type="InterPro" id="IPR036968">
    <property type="entry name" value="Enolpyruvate_Tfrase_sf"/>
</dbReference>
<dbReference type="InterPro" id="IPR050068">
    <property type="entry name" value="MurA_subfamily"/>
</dbReference>
<dbReference type="InterPro" id="IPR013792">
    <property type="entry name" value="RNA3'P_cycl/enolpyr_Trfase_a/b"/>
</dbReference>
<dbReference type="InterPro" id="IPR005750">
    <property type="entry name" value="UDP_GlcNAc_COvinyl_MurA"/>
</dbReference>
<dbReference type="NCBIfam" id="TIGR01072">
    <property type="entry name" value="murA"/>
    <property type="match status" value="1"/>
</dbReference>
<dbReference type="NCBIfam" id="NF006873">
    <property type="entry name" value="PRK09369.1"/>
    <property type="match status" value="1"/>
</dbReference>
<dbReference type="PANTHER" id="PTHR43783">
    <property type="entry name" value="UDP-N-ACETYLGLUCOSAMINE 1-CARBOXYVINYLTRANSFERASE"/>
    <property type="match status" value="1"/>
</dbReference>
<dbReference type="PANTHER" id="PTHR43783:SF1">
    <property type="entry name" value="UDP-N-ACETYLGLUCOSAMINE 1-CARBOXYVINYLTRANSFERASE"/>
    <property type="match status" value="1"/>
</dbReference>
<dbReference type="Pfam" id="PF00275">
    <property type="entry name" value="EPSP_synthase"/>
    <property type="match status" value="1"/>
</dbReference>
<dbReference type="SUPFAM" id="SSF55205">
    <property type="entry name" value="EPT/RTPC-like"/>
    <property type="match status" value="1"/>
</dbReference>
<evidence type="ECO:0000255" key="1">
    <source>
        <dbReference type="HAMAP-Rule" id="MF_00111"/>
    </source>
</evidence>
<gene>
    <name evidence="1" type="primary">murA</name>
    <name type="ordered locus">A1I_03685</name>
</gene>
<reference key="1">
    <citation type="submission" date="2007-09" db="EMBL/GenBank/DDBJ databases">
        <title>Complete genome sequencing of Rickettsia bellii.</title>
        <authorList>
            <person name="Madan A."/>
            <person name="Lee H."/>
            <person name="Madan A."/>
            <person name="Yoon J.-G."/>
            <person name="Ryu G.-Y."/>
            <person name="Dasch G."/>
            <person name="Ereemeva M."/>
        </authorList>
    </citation>
    <scope>NUCLEOTIDE SEQUENCE [LARGE SCALE GENOMIC DNA]</scope>
    <source>
        <strain>OSU 85-389</strain>
    </source>
</reference>
<organism>
    <name type="scientific">Rickettsia bellii (strain OSU 85-389)</name>
    <dbReference type="NCBI Taxonomy" id="391896"/>
    <lineage>
        <taxon>Bacteria</taxon>
        <taxon>Pseudomonadati</taxon>
        <taxon>Pseudomonadota</taxon>
        <taxon>Alphaproteobacteria</taxon>
        <taxon>Rickettsiales</taxon>
        <taxon>Rickettsiaceae</taxon>
        <taxon>Rickettsieae</taxon>
        <taxon>Rickettsia</taxon>
        <taxon>belli group</taxon>
    </lineage>
</organism>
<protein>
    <recommendedName>
        <fullName evidence="1">UDP-N-acetylglucosamine 1-carboxyvinyltransferase</fullName>
        <ecNumber evidence="1">2.5.1.7</ecNumber>
    </recommendedName>
    <alternativeName>
        <fullName evidence="1">Enoylpyruvate transferase</fullName>
    </alternativeName>
    <alternativeName>
        <fullName evidence="1">UDP-N-acetylglucosamine enolpyruvyl transferase</fullName>
        <shortName evidence="1">EPT</shortName>
    </alternativeName>
</protein>
<feature type="chain" id="PRO_1000023091" description="UDP-N-acetylglucosamine 1-carboxyvinyltransferase">
    <location>
        <begin position="1"/>
        <end position="419"/>
    </location>
</feature>
<feature type="active site" description="Proton donor" evidence="1">
    <location>
        <position position="119"/>
    </location>
</feature>
<feature type="binding site" evidence="1">
    <location>
        <begin position="22"/>
        <end position="23"/>
    </location>
    <ligand>
        <name>phosphoenolpyruvate</name>
        <dbReference type="ChEBI" id="CHEBI:58702"/>
    </ligand>
</feature>
<feature type="binding site" evidence="1">
    <location>
        <position position="95"/>
    </location>
    <ligand>
        <name>UDP-N-acetyl-alpha-D-glucosamine</name>
        <dbReference type="ChEBI" id="CHEBI:57705"/>
    </ligand>
</feature>
<feature type="binding site" evidence="1">
    <location>
        <position position="308"/>
    </location>
    <ligand>
        <name>UDP-N-acetyl-alpha-D-glucosamine</name>
        <dbReference type="ChEBI" id="CHEBI:57705"/>
    </ligand>
</feature>
<feature type="binding site" evidence="1">
    <location>
        <position position="330"/>
    </location>
    <ligand>
        <name>UDP-N-acetyl-alpha-D-glucosamine</name>
        <dbReference type="ChEBI" id="CHEBI:57705"/>
    </ligand>
</feature>
<feature type="modified residue" description="2-(S-cysteinyl)pyruvic acid O-phosphothioketal" evidence="1">
    <location>
        <position position="119"/>
    </location>
</feature>
<keyword id="KW-0131">Cell cycle</keyword>
<keyword id="KW-0132">Cell division</keyword>
<keyword id="KW-0133">Cell shape</keyword>
<keyword id="KW-0961">Cell wall biogenesis/degradation</keyword>
<keyword id="KW-0963">Cytoplasm</keyword>
<keyword id="KW-0573">Peptidoglycan synthesis</keyword>
<keyword id="KW-0670">Pyruvate</keyword>
<keyword id="KW-0808">Transferase</keyword>
<comment type="function">
    <text evidence="1">Cell wall formation. Adds enolpyruvyl to UDP-N-acetylglucosamine.</text>
</comment>
<comment type="catalytic activity">
    <reaction evidence="1">
        <text>phosphoenolpyruvate + UDP-N-acetyl-alpha-D-glucosamine = UDP-N-acetyl-3-O-(1-carboxyvinyl)-alpha-D-glucosamine + phosphate</text>
        <dbReference type="Rhea" id="RHEA:18681"/>
        <dbReference type="ChEBI" id="CHEBI:43474"/>
        <dbReference type="ChEBI" id="CHEBI:57705"/>
        <dbReference type="ChEBI" id="CHEBI:58702"/>
        <dbReference type="ChEBI" id="CHEBI:68483"/>
        <dbReference type="EC" id="2.5.1.7"/>
    </reaction>
</comment>
<comment type="pathway">
    <text evidence="1">Cell wall biogenesis; peptidoglycan biosynthesis.</text>
</comment>
<comment type="subcellular location">
    <subcellularLocation>
        <location evidence="1">Cytoplasm</location>
    </subcellularLocation>
</comment>
<comment type="similarity">
    <text evidence="1">Belongs to the EPSP synthase family. MurA subfamily.</text>
</comment>
<accession>A8GW63</accession>